<proteinExistence type="inferred from homology"/>
<dbReference type="EMBL" id="CP001016">
    <property type="protein sequence ID" value="ACB94986.1"/>
    <property type="molecule type" value="Genomic_DNA"/>
</dbReference>
<dbReference type="RefSeq" id="WP_012384343.1">
    <property type="nucleotide sequence ID" value="NC_010581.1"/>
</dbReference>
<dbReference type="SMR" id="B2IK54"/>
<dbReference type="STRING" id="395963.Bind_1346"/>
<dbReference type="KEGG" id="bid:Bind_1346"/>
<dbReference type="eggNOG" id="COG0222">
    <property type="taxonomic scope" value="Bacteria"/>
</dbReference>
<dbReference type="HOGENOM" id="CLU_086499_3_0_5"/>
<dbReference type="OrthoDB" id="9811748at2"/>
<dbReference type="Proteomes" id="UP000001695">
    <property type="component" value="Chromosome"/>
</dbReference>
<dbReference type="GO" id="GO:0022625">
    <property type="term" value="C:cytosolic large ribosomal subunit"/>
    <property type="evidence" value="ECO:0007669"/>
    <property type="project" value="TreeGrafter"/>
</dbReference>
<dbReference type="GO" id="GO:0003729">
    <property type="term" value="F:mRNA binding"/>
    <property type="evidence" value="ECO:0007669"/>
    <property type="project" value="TreeGrafter"/>
</dbReference>
<dbReference type="GO" id="GO:0003735">
    <property type="term" value="F:structural constituent of ribosome"/>
    <property type="evidence" value="ECO:0007669"/>
    <property type="project" value="InterPro"/>
</dbReference>
<dbReference type="GO" id="GO:0006412">
    <property type="term" value="P:translation"/>
    <property type="evidence" value="ECO:0007669"/>
    <property type="project" value="UniProtKB-UniRule"/>
</dbReference>
<dbReference type="CDD" id="cd00387">
    <property type="entry name" value="Ribosomal_L7_L12"/>
    <property type="match status" value="1"/>
</dbReference>
<dbReference type="FunFam" id="1.20.5.710:FF:000007">
    <property type="entry name" value="50S ribosomal protein L7/L12"/>
    <property type="match status" value="1"/>
</dbReference>
<dbReference type="FunFam" id="3.30.1390.10:FF:000001">
    <property type="entry name" value="50S ribosomal protein L7/L12"/>
    <property type="match status" value="1"/>
</dbReference>
<dbReference type="Gene3D" id="3.30.1390.10">
    <property type="match status" value="1"/>
</dbReference>
<dbReference type="Gene3D" id="1.20.5.710">
    <property type="entry name" value="Single helix bin"/>
    <property type="match status" value="1"/>
</dbReference>
<dbReference type="HAMAP" id="MF_00368">
    <property type="entry name" value="Ribosomal_bL12"/>
    <property type="match status" value="1"/>
</dbReference>
<dbReference type="InterPro" id="IPR000206">
    <property type="entry name" value="Ribosomal_bL12"/>
</dbReference>
<dbReference type="InterPro" id="IPR013823">
    <property type="entry name" value="Ribosomal_bL12_C"/>
</dbReference>
<dbReference type="InterPro" id="IPR014719">
    <property type="entry name" value="Ribosomal_bL12_C/ClpS-like"/>
</dbReference>
<dbReference type="InterPro" id="IPR008932">
    <property type="entry name" value="Ribosomal_bL12_oligo"/>
</dbReference>
<dbReference type="InterPro" id="IPR036235">
    <property type="entry name" value="Ribosomal_bL12_oligo_N_sf"/>
</dbReference>
<dbReference type="NCBIfam" id="TIGR00855">
    <property type="entry name" value="L12"/>
    <property type="match status" value="1"/>
</dbReference>
<dbReference type="PANTHER" id="PTHR45987">
    <property type="entry name" value="39S RIBOSOMAL PROTEIN L12"/>
    <property type="match status" value="1"/>
</dbReference>
<dbReference type="PANTHER" id="PTHR45987:SF4">
    <property type="entry name" value="LARGE RIBOSOMAL SUBUNIT PROTEIN BL12M"/>
    <property type="match status" value="1"/>
</dbReference>
<dbReference type="Pfam" id="PF00542">
    <property type="entry name" value="Ribosomal_L12"/>
    <property type="match status" value="1"/>
</dbReference>
<dbReference type="Pfam" id="PF16320">
    <property type="entry name" value="Ribosomal_L12_N"/>
    <property type="match status" value="1"/>
</dbReference>
<dbReference type="SUPFAM" id="SSF54736">
    <property type="entry name" value="ClpS-like"/>
    <property type="match status" value="1"/>
</dbReference>
<dbReference type="SUPFAM" id="SSF48300">
    <property type="entry name" value="Ribosomal protein L7/12, oligomerisation (N-terminal) domain"/>
    <property type="match status" value="1"/>
</dbReference>
<accession>B2IK54</accession>
<sequence length="126" mass="12814">MADLAKIVEDLSSLTVLEAAELAKLLEEKWGVSAAAAVAVAAGPAAGGAAAAPVEEQTEFTVVLAAVGDKKIEVIKEVRGVTGLGLKEAKDLVEAAPKPVKEGVSKEEAEKIKAALEKAGAKVELK</sequence>
<organism>
    <name type="scientific">Beijerinckia indica subsp. indica (strain ATCC 9039 / DSM 1715 / NCIMB 8712)</name>
    <dbReference type="NCBI Taxonomy" id="395963"/>
    <lineage>
        <taxon>Bacteria</taxon>
        <taxon>Pseudomonadati</taxon>
        <taxon>Pseudomonadota</taxon>
        <taxon>Alphaproteobacteria</taxon>
        <taxon>Hyphomicrobiales</taxon>
        <taxon>Beijerinckiaceae</taxon>
        <taxon>Beijerinckia</taxon>
    </lineage>
</organism>
<gene>
    <name evidence="1" type="primary">rplL</name>
    <name type="ordered locus">Bind_1346</name>
</gene>
<comment type="function">
    <text evidence="1">Forms part of the ribosomal stalk which helps the ribosome interact with GTP-bound translation factors. Is thus essential for accurate translation.</text>
</comment>
<comment type="subunit">
    <text evidence="1">Homodimer. Part of the ribosomal stalk of the 50S ribosomal subunit. Forms a multimeric L10(L12)X complex, where L10 forms an elongated spine to which 2 to 4 L12 dimers bind in a sequential fashion. Binds GTP-bound translation factors.</text>
</comment>
<comment type="similarity">
    <text evidence="1">Belongs to the bacterial ribosomal protein bL12 family.</text>
</comment>
<feature type="chain" id="PRO_1000121393" description="Large ribosomal subunit protein bL12">
    <location>
        <begin position="1"/>
        <end position="126"/>
    </location>
</feature>
<evidence type="ECO:0000255" key="1">
    <source>
        <dbReference type="HAMAP-Rule" id="MF_00368"/>
    </source>
</evidence>
<evidence type="ECO:0000305" key="2"/>
<reference key="1">
    <citation type="journal article" date="2010" name="J. Bacteriol.">
        <title>Complete genome sequence of Beijerinckia indica subsp. indica.</title>
        <authorList>
            <person name="Tamas I."/>
            <person name="Dedysh S.N."/>
            <person name="Liesack W."/>
            <person name="Stott M.B."/>
            <person name="Alam M."/>
            <person name="Murrell J.C."/>
            <person name="Dunfield P.F."/>
        </authorList>
    </citation>
    <scope>NUCLEOTIDE SEQUENCE [LARGE SCALE GENOMIC DNA]</scope>
    <source>
        <strain>ATCC 9039 / DSM 1715 / NCIMB 8712</strain>
    </source>
</reference>
<keyword id="KW-1185">Reference proteome</keyword>
<keyword id="KW-0687">Ribonucleoprotein</keyword>
<keyword id="KW-0689">Ribosomal protein</keyword>
<protein>
    <recommendedName>
        <fullName evidence="1">Large ribosomal subunit protein bL12</fullName>
    </recommendedName>
    <alternativeName>
        <fullName evidence="2">50S ribosomal protein L7/L12</fullName>
    </alternativeName>
</protein>
<name>RL7_BEII9</name>